<organism>
    <name type="scientific">Macaca mulatta</name>
    <name type="common">Rhesus macaque</name>
    <dbReference type="NCBI Taxonomy" id="9544"/>
    <lineage>
        <taxon>Eukaryota</taxon>
        <taxon>Metazoa</taxon>
        <taxon>Chordata</taxon>
        <taxon>Craniata</taxon>
        <taxon>Vertebrata</taxon>
        <taxon>Euteleostomi</taxon>
        <taxon>Mammalia</taxon>
        <taxon>Eutheria</taxon>
        <taxon>Euarchontoglires</taxon>
        <taxon>Primates</taxon>
        <taxon>Haplorrhini</taxon>
        <taxon>Catarrhini</taxon>
        <taxon>Cercopithecidae</taxon>
        <taxon>Cercopithecinae</taxon>
        <taxon>Macaca</taxon>
    </lineage>
</organism>
<comment type="function">
    <text evidence="1">Receptor for pituitary gland growth hormone (GH1) involved in regulating postnatal body growth. On ligand binding, couples to the JAK2/STAT5 pathway.</text>
</comment>
<comment type="function">
    <molecule>Growth hormone-binding protein</molecule>
    <text evidence="1">The soluble form (GHBP) acts as a reservoir of growth hormone in plasma and may be a modulator/inhibitor of GH signaling.</text>
</comment>
<comment type="subunit">
    <text evidence="1">On growth hormone (GH) binding, forms homodimers and binds JAK2 via a box 1-containing domain.</text>
</comment>
<comment type="subcellular location">
    <subcellularLocation>
        <location evidence="1">Cell membrane</location>
        <topology evidence="4">Single-pass type I membrane protein</topology>
    </subcellularLocation>
    <text evidence="3">On growth hormone binding, GHR is ubiquitinated, internalized, down-regulated and transported into a degradative or non-degradative pathway.</text>
</comment>
<comment type="subcellular location">
    <molecule>Growth hormone-binding protein</molecule>
    <subcellularLocation>
        <location evidence="1">Secreted</location>
    </subcellularLocation>
    <text evidence="1">Complexed to a substantial fraction of circulating GH.</text>
</comment>
<comment type="domain">
    <text evidence="1">The WSXWS motif appears to be necessary for proper protein folding and thereby efficient intracellular transport and cell-surface receptor binding.</text>
</comment>
<comment type="domain">
    <text evidence="2">The box 1 motif is required for JAK interaction and/or activation.</text>
</comment>
<comment type="domain">
    <text evidence="1">The extracellular domain is the ligand-binding domain representing the growth hormone-binding protein (GHBP).</text>
</comment>
<comment type="domain">
    <text evidence="3">The ubiquitination-dependent endocytosis motif (UbE) is required for recruitment of the ubiquitin conjugation system on to the receptor and for its internalization.</text>
</comment>
<comment type="PTM">
    <text evidence="1 3">The soluble form (GHBP) is produced by phorbol ester-promoted proteolytic cleavage at the cell surface (shedding) by ADAM17/TACE (By similarity). Shedding is inhibited by growth hormone (GH) binding to the receptor probably due to a conformational change in GHR rendering the receptor inaccessible to ADAM17 (By similarity).</text>
</comment>
<comment type="PTM">
    <text evidence="1">On GH binding, phosphorylated on tyrosine residues in the cytoplasmic domain by JAK2.</text>
</comment>
<comment type="PTM">
    <text evidence="1 3">Ubiquitinated by the ECS(SOCS2) complex following ligand-binding and phosphorylation by JAK2, leading to its degradation by the proteasome. Regulation by the ECS(SOCS2) complex acts as a negative feedback loop of growth hormone receptor signaling (By similarity). Ubiquitination is not sufficient for GHR internalization (By similarity).</text>
</comment>
<comment type="similarity">
    <text evidence="8">Belongs to the type I cytokine receptor family. Type 1 subfamily.</text>
</comment>
<proteinExistence type="evidence at transcript level"/>
<feature type="signal peptide" evidence="4">
    <location>
        <begin position="1"/>
        <end position="18"/>
    </location>
</feature>
<feature type="chain" id="PRO_0000010959" description="Growth hormone receptor">
    <location>
        <begin position="19"/>
        <end position="638"/>
    </location>
</feature>
<feature type="chain" id="PRO_0000010960" description="Growth hormone-binding protein" evidence="3">
    <location>
        <begin position="19"/>
        <end position="256"/>
    </location>
</feature>
<feature type="topological domain" description="Extracellular" evidence="4">
    <location>
        <begin position="19"/>
        <end position="264"/>
    </location>
</feature>
<feature type="transmembrane region" description="Helical" evidence="4">
    <location>
        <begin position="265"/>
        <end position="288"/>
    </location>
</feature>
<feature type="topological domain" description="Cytoplasmic" evidence="4">
    <location>
        <begin position="289"/>
        <end position="638"/>
    </location>
</feature>
<feature type="domain" description="Fibronectin type-III" evidence="5">
    <location>
        <begin position="151"/>
        <end position="254"/>
    </location>
</feature>
<feature type="region of interest" description="Required for JAK2 binding" evidence="2">
    <location>
        <begin position="294"/>
        <end position="379"/>
    </location>
</feature>
<feature type="region of interest" description="Disordered" evidence="6">
    <location>
        <begin position="353"/>
        <end position="388"/>
    </location>
</feature>
<feature type="short sequence motif" description="WSXWS motif" evidence="1">
    <location>
        <begin position="240"/>
        <end position="244"/>
    </location>
</feature>
<feature type="short sequence motif" description="Box 1 motif" evidence="2">
    <location>
        <begin position="297"/>
        <end position="305"/>
    </location>
</feature>
<feature type="short sequence motif" description="UbE motif" evidence="3">
    <location>
        <begin position="340"/>
        <end position="349"/>
    </location>
</feature>
<feature type="compositionally biased region" description="Basic and acidic residues" evidence="6">
    <location>
        <begin position="356"/>
        <end position="372"/>
    </location>
</feature>
<feature type="modified residue" description="Phosphoserine" evidence="1">
    <location>
        <position position="341"/>
    </location>
</feature>
<feature type="modified residue" description="Phosphotyrosine" evidence="1">
    <location>
        <position position="487"/>
    </location>
</feature>
<feature type="modified residue" description="Phosphotyrosine" evidence="1">
    <location>
        <position position="595"/>
    </location>
</feature>
<feature type="glycosylation site" description="N-linked (GlcNAc...) asparagine" evidence="4">
    <location>
        <position position="46"/>
    </location>
</feature>
<feature type="glycosylation site" description="N-linked (GlcNAc...) asparagine" evidence="4">
    <location>
        <position position="115"/>
    </location>
</feature>
<feature type="glycosylation site" description="N-linked (GlcNAc...) asparagine" evidence="4">
    <location>
        <position position="156"/>
    </location>
</feature>
<feature type="glycosylation site" description="N-linked (GlcNAc...) asparagine" evidence="4">
    <location>
        <position position="161"/>
    </location>
</feature>
<feature type="glycosylation site" description="N-linked (GlcNAc...) asparagine" evidence="4">
    <location>
        <position position="200"/>
    </location>
</feature>
<feature type="disulfide bond" evidence="1">
    <location>
        <begin position="56"/>
        <end position="66"/>
    </location>
</feature>
<feature type="disulfide bond" evidence="1">
    <location>
        <begin position="101"/>
        <end position="112"/>
    </location>
</feature>
<feature type="disulfide bond" evidence="1">
    <location>
        <begin position="126"/>
        <end position="140"/>
    </location>
</feature>
<evidence type="ECO:0000250" key="1">
    <source>
        <dbReference type="UniProtKB" id="P10912"/>
    </source>
</evidence>
<evidence type="ECO:0000250" key="2">
    <source>
        <dbReference type="UniProtKB" id="P16310"/>
    </source>
</evidence>
<evidence type="ECO:0000250" key="3">
    <source>
        <dbReference type="UniProtKB" id="P19941"/>
    </source>
</evidence>
<evidence type="ECO:0000255" key="4"/>
<evidence type="ECO:0000255" key="5">
    <source>
        <dbReference type="PROSITE-ProRule" id="PRU00316"/>
    </source>
</evidence>
<evidence type="ECO:0000256" key="6">
    <source>
        <dbReference type="SAM" id="MobiDB-lite"/>
    </source>
</evidence>
<evidence type="ECO:0000303" key="7">
    <source>
    </source>
</evidence>
<evidence type="ECO:0000305" key="8"/>
<sequence length="638" mass="71328">MDLWQLLLTLALAGSSDAFSGSEPTAAILSRASWSLQSVNPGLKTNSSKEPKFTKCRSPERETFSCHWTDAVHHGSKSLGPIQLFYTRRNIQGQTQEWKECPDYVSAGENSCYFNSSFTSVWIPYCIKLTSNGDTVDGKCFSVDEIVQPDPPIALNWTLLNVSLTGIHADILVRWEAPPNADIQKGWMVLEYELQYKEVNETKWKMMDPILSTSVPVYSLKVDKEYEVLVRSKRRNSRNYGEFSEVLYVTLPQMNQFTCEEDFYFPWLLIIIFGIFGLTVMLFVFLFSKQQRIKMLILPPVPVPKIKGINPDLLKEGKLEEVNAILAIHDSYKPEFHSDDSWVEFIELDIDEPDEKNEGSDTDRLLSSDHQKSHSNLGVKDGDSGRTSCYEPDILETDFNANNIHEGTSEVAQPQRLKGEADLLCLDQKNQNKSPYHDACPATQQPSVIQAEKNKPQPLPTDGAESTHQAAHIQLSNPSSLANIDFYAQVSDITPAGSVVLSPGQKNKAGMSQCDMHLEMVSLCQEDFIMDNAYFCEADAKKCIPVAPHIKVESHIEPSFNQEDIYITTESLTTTAGRPGTTEHIPGSEMPVPDYTSIHIVQSPQGLILNATALPLPGKEFLSSCGYVSTDQLNKIMP</sequence>
<accession>P79194</accession>
<keyword id="KW-1003">Cell membrane</keyword>
<keyword id="KW-1015">Disulfide bond</keyword>
<keyword id="KW-0254">Endocytosis</keyword>
<keyword id="KW-0325">Glycoprotein</keyword>
<keyword id="KW-0472">Membrane</keyword>
<keyword id="KW-0597">Phosphoprotein</keyword>
<keyword id="KW-0675">Receptor</keyword>
<keyword id="KW-1185">Reference proteome</keyword>
<keyword id="KW-0964">Secreted</keyword>
<keyword id="KW-0732">Signal</keyword>
<keyword id="KW-0812">Transmembrane</keyword>
<keyword id="KW-1133">Transmembrane helix</keyword>
<keyword id="KW-0832">Ubl conjugation</keyword>
<reference key="1">
    <citation type="journal article" date="1997" name="J. Biol. Chem.">
        <title>Monkey growth hormone (GH) receptor gene expression. Evidence for two mechanisms for the generation of the GH binding protein.</title>
        <authorList>
            <person name="Martini J.-F."/>
            <person name="Pezet A."/>
            <person name="Guezennec C.Y."/>
            <person name="Edery M."/>
            <person name="Postel-Vinay M.-C."/>
            <person name="Kelly P.A."/>
        </authorList>
    </citation>
    <scope>NUCLEOTIDE SEQUENCE [MRNA]</scope>
</reference>
<gene>
    <name type="primary">GHR</name>
</gene>
<dbReference type="EMBL" id="U84589">
    <property type="protein sequence ID" value="AAB47702.1"/>
    <property type="molecule type" value="mRNA"/>
</dbReference>
<dbReference type="RefSeq" id="NP_001036132.1">
    <property type="nucleotide sequence ID" value="NM_001042667.1"/>
</dbReference>
<dbReference type="SMR" id="P79194"/>
<dbReference type="FunCoup" id="P79194">
    <property type="interactions" value="1007"/>
</dbReference>
<dbReference type="STRING" id="9544.ENSMMUP00000001786"/>
<dbReference type="GlyCosmos" id="P79194">
    <property type="glycosylation" value="5 sites, No reported glycans"/>
</dbReference>
<dbReference type="PaxDb" id="9544-ENSMMUP00000001785"/>
<dbReference type="GeneID" id="697986"/>
<dbReference type="KEGG" id="mcc:697986"/>
<dbReference type="CTD" id="2690"/>
<dbReference type="eggNOG" id="KOG3555">
    <property type="taxonomic scope" value="Eukaryota"/>
</dbReference>
<dbReference type="InParanoid" id="P79194"/>
<dbReference type="OrthoDB" id="9890215at2759"/>
<dbReference type="Proteomes" id="UP000006718">
    <property type="component" value="Unassembled WGS sequence"/>
</dbReference>
<dbReference type="GO" id="GO:0005829">
    <property type="term" value="C:cytosol"/>
    <property type="evidence" value="ECO:0000318"/>
    <property type="project" value="GO_Central"/>
</dbReference>
<dbReference type="GO" id="GO:0009897">
    <property type="term" value="C:external side of plasma membrane"/>
    <property type="evidence" value="ECO:0000318"/>
    <property type="project" value="GO_Central"/>
</dbReference>
<dbReference type="GO" id="GO:0005576">
    <property type="term" value="C:extracellular region"/>
    <property type="evidence" value="ECO:0007669"/>
    <property type="project" value="UniProtKB-SubCell"/>
</dbReference>
<dbReference type="GO" id="GO:0070195">
    <property type="term" value="C:growth hormone receptor complex"/>
    <property type="evidence" value="ECO:0000318"/>
    <property type="project" value="GO_Central"/>
</dbReference>
<dbReference type="GO" id="GO:0019955">
    <property type="term" value="F:cytokine binding"/>
    <property type="evidence" value="ECO:0000318"/>
    <property type="project" value="GO_Central"/>
</dbReference>
<dbReference type="GO" id="GO:0004903">
    <property type="term" value="F:growth hormone receptor activity"/>
    <property type="evidence" value="ECO:0000318"/>
    <property type="project" value="GO_Central"/>
</dbReference>
<dbReference type="GO" id="GO:0017046">
    <property type="term" value="F:peptide hormone binding"/>
    <property type="evidence" value="ECO:0000318"/>
    <property type="project" value="GO_Central"/>
</dbReference>
<dbReference type="GO" id="GO:0019221">
    <property type="term" value="P:cytokine-mediated signaling pathway"/>
    <property type="evidence" value="ECO:0000318"/>
    <property type="project" value="GO_Central"/>
</dbReference>
<dbReference type="GO" id="GO:0006897">
    <property type="term" value="P:endocytosis"/>
    <property type="evidence" value="ECO:0007669"/>
    <property type="project" value="UniProtKB-KW"/>
</dbReference>
<dbReference type="GO" id="GO:0060396">
    <property type="term" value="P:growth hormone receptor signaling pathway"/>
    <property type="evidence" value="ECO:0000318"/>
    <property type="project" value="GO_Central"/>
</dbReference>
<dbReference type="GO" id="GO:0008284">
    <property type="term" value="P:positive regulation of cell population proliferation"/>
    <property type="evidence" value="ECO:0000318"/>
    <property type="project" value="GO_Central"/>
</dbReference>
<dbReference type="GO" id="GO:0046427">
    <property type="term" value="P:positive regulation of receptor signaling pathway via JAK-STAT"/>
    <property type="evidence" value="ECO:0000318"/>
    <property type="project" value="GO_Central"/>
</dbReference>
<dbReference type="CDD" id="cd00063">
    <property type="entry name" value="FN3"/>
    <property type="match status" value="1"/>
</dbReference>
<dbReference type="FunFam" id="2.60.40.10:FF:000269">
    <property type="entry name" value="Growth hormone receptor"/>
    <property type="match status" value="1"/>
</dbReference>
<dbReference type="FunFam" id="2.60.40.10:FF:000318">
    <property type="entry name" value="Growth hormone receptor"/>
    <property type="match status" value="1"/>
</dbReference>
<dbReference type="Gene3D" id="2.60.40.10">
    <property type="entry name" value="Immunoglobulins"/>
    <property type="match status" value="2"/>
</dbReference>
<dbReference type="InterPro" id="IPR003961">
    <property type="entry name" value="FN3_dom"/>
</dbReference>
<dbReference type="InterPro" id="IPR036116">
    <property type="entry name" value="FN3_sf"/>
</dbReference>
<dbReference type="InterPro" id="IPR025871">
    <property type="entry name" value="GHBP"/>
</dbReference>
<dbReference type="InterPro" id="IPR015152">
    <property type="entry name" value="Growth/epo_recpt_lig-bind"/>
</dbReference>
<dbReference type="InterPro" id="IPR013783">
    <property type="entry name" value="Ig-like_fold"/>
</dbReference>
<dbReference type="InterPro" id="IPR003528">
    <property type="entry name" value="Long_hematopoietin_rcpt_CS"/>
</dbReference>
<dbReference type="PANTHER" id="PTHR23037">
    <property type="entry name" value="CYTOKINE RECEPTOR"/>
    <property type="match status" value="1"/>
</dbReference>
<dbReference type="PANTHER" id="PTHR23037:SF46">
    <property type="entry name" value="INTERLEUKIN 5 RECEPTOR SUBUNIT ALPHA"/>
    <property type="match status" value="1"/>
</dbReference>
<dbReference type="Pfam" id="PF09067">
    <property type="entry name" value="EpoR_lig-bind"/>
    <property type="match status" value="1"/>
</dbReference>
<dbReference type="Pfam" id="PF12772">
    <property type="entry name" value="GHBP"/>
    <property type="match status" value="1"/>
</dbReference>
<dbReference type="SUPFAM" id="SSF49265">
    <property type="entry name" value="Fibronectin type III"/>
    <property type="match status" value="2"/>
</dbReference>
<dbReference type="PROSITE" id="PS50853">
    <property type="entry name" value="FN3"/>
    <property type="match status" value="1"/>
</dbReference>
<dbReference type="PROSITE" id="PS01352">
    <property type="entry name" value="HEMATOPO_REC_L_F1"/>
    <property type="match status" value="1"/>
</dbReference>
<protein>
    <recommendedName>
        <fullName evidence="7">Growth hormone receptor</fullName>
        <shortName>GH receptor</shortName>
    </recommendedName>
    <alternativeName>
        <fullName>Somatotropin receptor</fullName>
    </alternativeName>
    <component>
        <recommendedName>
            <fullName>Growth hormone-binding protein</fullName>
            <shortName>GH-binding protein</shortName>
            <shortName>GHBP</shortName>
        </recommendedName>
        <alternativeName>
            <fullName>Serum-binding protein</fullName>
        </alternativeName>
    </component>
</protein>
<name>GHR_MACMU</name>